<comment type="function">
    <text evidence="3">Component of the CENPA-NAC (nucleosome-associated) complex, a complex that plays a central role in assembly of kinetochore proteins, mitotic progression and chromosome segregation. The CENPA-NAC complex recruits the CENPA-CAD (nucleosome distal) complex and may be involved in incorporation of newly synthesized CENPA into centromeres. CENPC recruits DNA methylation and DNMT3B to both centromeric and pericentromeric satellite repeats and regulates the histone code in these regions.</text>
</comment>
<comment type="subunit">
    <text evidence="2 3">Oligomer. Component of the CENPA-NAC complex, at least composed of CENPA, CENPC, CENPH, CENPM, CENPN, CENPT and CENPU. The CENPA-NAC complex interacts with the CENPA-CAD complex, composed of CENPI, CENPK, CENPL, CENPO, CENPP, CENPQ, CENPR and CENPS. Binds to DAXX. Interacts with DNMT3B. Interacts directly with CENPA. Identified in a centromere complex containing histones H2A, H2B and H4, and at least CENPA, CENPB, CENPC, CENPT, CENPN, HJURP, SUPT16H, SSRP1 and RSF1 (By similarity). Interacts with MEIKIN (By similarity).</text>
</comment>
<comment type="subcellular location">
    <subcellularLocation>
        <location evidence="3">Nucleus</location>
    </subcellularLocation>
    <subcellularLocation>
        <location evidence="3">Chromosome</location>
        <location evidence="3">Centromere</location>
        <location evidence="3">Kinetochore</location>
    </subcellularLocation>
    <subcellularLocation>
        <location evidence="3">Chromosome</location>
        <location evidence="3">Centromere</location>
    </subcellularLocation>
    <text evidence="3">Localizes exclusively in the kinetochore domain of centromeres.</text>
</comment>
<comment type="domain">
    <text evidence="2">The MIF2 homology domain II targets centromeres and binds the alpha satellite DNA in vivo. The MIF2 homology domain III can induce CENPC dimerization/oligomerization.</text>
</comment>
<comment type="similarity">
    <text evidence="6">Belongs to the CENP-C/MIF2 family.</text>
</comment>
<proteinExistence type="evidence at transcript level"/>
<feature type="chain" id="PRO_0000089476" description="Centromere protein C">
    <location>
        <begin position="1" status="less than"/>
        <end position="402"/>
    </location>
</feature>
<feature type="region of interest" description="Disordered" evidence="5">
    <location>
        <begin position="1"/>
        <end position="118"/>
    </location>
</feature>
<feature type="region of interest" description="MIF2 homology domain II" evidence="1">
    <location>
        <begin position="196"/>
        <end position="218"/>
    </location>
</feature>
<feature type="region of interest" description="MIF2 homology domain III" evidence="1">
    <location>
        <begin position="349"/>
        <end position="402"/>
    </location>
</feature>
<feature type="short sequence motif" description="Nuclear localization signal" evidence="4">
    <location>
        <begin position="25"/>
        <end position="42"/>
    </location>
</feature>
<feature type="short sequence motif" description="Nuclear localization signal" evidence="4">
    <location>
        <begin position="239"/>
        <end position="257"/>
    </location>
</feature>
<feature type="compositionally biased region" description="Low complexity" evidence="5">
    <location>
        <begin position="1"/>
        <end position="12"/>
    </location>
</feature>
<feature type="compositionally biased region" description="Basic residues" evidence="5">
    <location>
        <begin position="44"/>
        <end position="53"/>
    </location>
</feature>
<feature type="compositionally biased region" description="Polar residues" evidence="5">
    <location>
        <begin position="88"/>
        <end position="118"/>
    </location>
</feature>
<feature type="modified residue" description="Phosphoserine" evidence="3">
    <location>
        <position position="5"/>
    </location>
</feature>
<feature type="modified residue" description="Phosphothreonine" evidence="3">
    <location>
        <position position="193"/>
    </location>
</feature>
<feature type="modified residue" description="Phosphoserine" evidence="3">
    <location>
        <position position="222"/>
    </location>
</feature>
<feature type="modified residue" description="Phosphoserine" evidence="3">
    <location>
        <position position="232"/>
    </location>
</feature>
<feature type="cross-link" description="Glycyl lysine isopeptide (Lys-Gly) (interchain with G-Cter in SUMO2)" evidence="3">
    <location>
        <position position="1"/>
    </location>
</feature>
<feature type="cross-link" description="Glycyl lysine isopeptide (Lys-Gly) (interchain with G-Cter in SUMO2)" evidence="3">
    <location>
        <position position="186"/>
    </location>
</feature>
<feature type="cross-link" description="Glycyl lysine isopeptide (Lys-Gly) (interchain with G-Cter in SUMO2)" evidence="3">
    <location>
        <position position="266"/>
    </location>
</feature>
<feature type="non-terminal residue">
    <location>
        <position position="1"/>
    </location>
</feature>
<gene>
    <name type="primary">CENPC</name>
    <name type="synonym">CENPC1</name>
</gene>
<reference key="1">
    <citation type="journal article" date="1996" name="Cytogenet. Cell Genet.">
        <title>Sheep CENPB and CENPC genes show a high level of sequence similarity and conserved synteny with their human homologs.</title>
        <authorList>
            <person name="Burkin D.J."/>
            <person name="Jones C.A."/>
            <person name="Burkin H.R."/>
            <person name="McGrew J.A."/>
            <person name="Broad T.E."/>
        </authorList>
    </citation>
    <scope>NUCLEOTIDE SEQUENCE [MRNA]</scope>
    <source>
        <tissue>Lung</tissue>
    </source>
</reference>
<organism>
    <name type="scientific">Ovis aries</name>
    <name type="common">Sheep</name>
    <dbReference type="NCBI Taxonomy" id="9940"/>
    <lineage>
        <taxon>Eukaryota</taxon>
        <taxon>Metazoa</taxon>
        <taxon>Chordata</taxon>
        <taxon>Craniata</taxon>
        <taxon>Vertebrata</taxon>
        <taxon>Euteleostomi</taxon>
        <taxon>Mammalia</taxon>
        <taxon>Eutheria</taxon>
        <taxon>Laurasiatheria</taxon>
        <taxon>Artiodactyla</taxon>
        <taxon>Ruminantia</taxon>
        <taxon>Pecora</taxon>
        <taxon>Bovidae</taxon>
        <taxon>Caprinae</taxon>
        <taxon>Ovis</taxon>
    </lineage>
</organism>
<dbReference type="EMBL" id="U35657">
    <property type="protein sequence ID" value="AAA79099.1"/>
    <property type="molecule type" value="mRNA"/>
</dbReference>
<dbReference type="SMR" id="P49453"/>
<dbReference type="STRING" id="9940.ENSOARP00000007315"/>
<dbReference type="PaxDb" id="9940-ENSOARP00000007315"/>
<dbReference type="eggNOG" id="ENOG502RYQH">
    <property type="taxonomic scope" value="Eukaryota"/>
</dbReference>
<dbReference type="Proteomes" id="UP000002356">
    <property type="component" value="Unplaced"/>
</dbReference>
<dbReference type="GO" id="GO:0000776">
    <property type="term" value="C:kinetochore"/>
    <property type="evidence" value="ECO:0000250"/>
    <property type="project" value="UniProtKB"/>
</dbReference>
<dbReference type="GO" id="GO:0005634">
    <property type="term" value="C:nucleus"/>
    <property type="evidence" value="ECO:0007669"/>
    <property type="project" value="UniProtKB-SubCell"/>
</dbReference>
<dbReference type="GO" id="GO:0005721">
    <property type="term" value="C:pericentric heterochromatin"/>
    <property type="evidence" value="ECO:0000250"/>
    <property type="project" value="UniProtKB"/>
</dbReference>
<dbReference type="GO" id="GO:0019237">
    <property type="term" value="F:centromeric DNA binding"/>
    <property type="evidence" value="ECO:0007669"/>
    <property type="project" value="InterPro"/>
</dbReference>
<dbReference type="GO" id="GO:0051315">
    <property type="term" value="P:attachment of mitotic spindle microtubules to kinetochore"/>
    <property type="evidence" value="ECO:0007669"/>
    <property type="project" value="TreeGrafter"/>
</dbReference>
<dbReference type="GO" id="GO:0051301">
    <property type="term" value="P:cell division"/>
    <property type="evidence" value="ECO:0007669"/>
    <property type="project" value="UniProtKB-KW"/>
</dbReference>
<dbReference type="GO" id="GO:0007059">
    <property type="term" value="P:chromosome segregation"/>
    <property type="evidence" value="ECO:0000250"/>
    <property type="project" value="UniProtKB"/>
</dbReference>
<dbReference type="GO" id="GO:0051382">
    <property type="term" value="P:kinetochore assembly"/>
    <property type="evidence" value="ECO:0000250"/>
    <property type="project" value="UniProtKB"/>
</dbReference>
<dbReference type="GO" id="GO:0000278">
    <property type="term" value="P:mitotic cell cycle"/>
    <property type="evidence" value="ECO:0000250"/>
    <property type="project" value="UniProtKB"/>
</dbReference>
<dbReference type="GO" id="GO:0051455">
    <property type="term" value="P:spindle attachment to meiosis I kinetochore"/>
    <property type="evidence" value="ECO:0007669"/>
    <property type="project" value="TreeGrafter"/>
</dbReference>
<dbReference type="FunFam" id="2.60.120.10:FF:000033">
    <property type="entry name" value="Centromere protein C 1"/>
    <property type="match status" value="1"/>
</dbReference>
<dbReference type="Gene3D" id="2.60.120.10">
    <property type="entry name" value="Jelly Rolls"/>
    <property type="match status" value="1"/>
</dbReference>
<dbReference type="InterPro" id="IPR028386">
    <property type="entry name" value="CENP-C/Mif2/cnp3"/>
</dbReference>
<dbReference type="InterPro" id="IPR025974">
    <property type="entry name" value="Mif2/CENP-C_cupin"/>
</dbReference>
<dbReference type="InterPro" id="IPR014710">
    <property type="entry name" value="RmlC-like_jellyroll"/>
</dbReference>
<dbReference type="InterPro" id="IPR011051">
    <property type="entry name" value="RmlC_Cupin_sf"/>
</dbReference>
<dbReference type="PANTHER" id="PTHR16684">
    <property type="entry name" value="CENTROMERE PROTEIN C"/>
    <property type="match status" value="1"/>
</dbReference>
<dbReference type="PANTHER" id="PTHR16684:SF11">
    <property type="entry name" value="CENTROMERE PROTEIN C"/>
    <property type="match status" value="1"/>
</dbReference>
<dbReference type="Pfam" id="PF11699">
    <property type="entry name" value="CENP-C_C"/>
    <property type="match status" value="1"/>
</dbReference>
<dbReference type="SUPFAM" id="SSF51182">
    <property type="entry name" value="RmlC-like cupins"/>
    <property type="match status" value="1"/>
</dbReference>
<name>CENPC_SHEEP</name>
<evidence type="ECO:0000250" key="1"/>
<evidence type="ECO:0000250" key="2">
    <source>
        <dbReference type="UniProtKB" id="P49452"/>
    </source>
</evidence>
<evidence type="ECO:0000250" key="3">
    <source>
        <dbReference type="UniProtKB" id="Q03188"/>
    </source>
</evidence>
<evidence type="ECO:0000255" key="4"/>
<evidence type="ECO:0000256" key="5">
    <source>
        <dbReference type="SAM" id="MobiDB-lite"/>
    </source>
</evidence>
<evidence type="ECO:0000305" key="6"/>
<sequence length="402" mass="45065">KSEQSSFSSSSSVRNELSVYHNSRQKPPAEKTNQSSKNIGKKAAPFKKQKRANKGSSGAQVLYAKDSGGAQNESLRSNEADLAKKKNPNPSGDTGSSKNQDSMAAQNVHQKSQMSVETCTTPSKSNLILESLGLQFFGREVTLFRLKNYLTSERHSDVDDNVVQENLNDSRGEIPDSTPESKMHHKLVLPSYTPNVRRTMRTRSKPLEYWRGERIDYQARPSGGFVIGGILSPDTVSSKRKAKGNLGRIITTANRKRICLENAPIKNKFMVNLNIPLGDPLQPTRVKDPETQETVLMDLIRPRDTYQFCVEHDELKVYKTLDTPFFSSGKLIIGPLQEKGKQHVGLDTLVFYVNLGYLLCTLHETPYIVTTGDSFYVPSGNYYNIKNLLNEERVLLFTQIKS</sequence>
<keyword id="KW-0131">Cell cycle</keyword>
<keyword id="KW-0132">Cell division</keyword>
<keyword id="KW-0137">Centromere</keyword>
<keyword id="KW-0158">Chromosome</keyword>
<keyword id="KW-0238">DNA-binding</keyword>
<keyword id="KW-1017">Isopeptide bond</keyword>
<keyword id="KW-0995">Kinetochore</keyword>
<keyword id="KW-0498">Mitosis</keyword>
<keyword id="KW-0539">Nucleus</keyword>
<keyword id="KW-0597">Phosphoprotein</keyword>
<keyword id="KW-1185">Reference proteome</keyword>
<keyword id="KW-0832">Ubl conjugation</keyword>
<protein>
    <recommendedName>
        <fullName>Centromere protein C</fullName>
        <shortName>CENP-C</shortName>
    </recommendedName>
    <alternativeName>
        <fullName>Centromere autoantigen C</fullName>
    </alternativeName>
    <alternativeName>
        <fullName>Centromere protein C 1</fullName>
        <shortName>CENP-C 1</shortName>
    </alternativeName>
</protein>
<accession>P49453</accession>